<feature type="chain" id="PRO_0000068528" description="Uncharacterized 5.4 kDa protein in replication origin region">
    <location>
        <begin position="1"/>
        <end position="51"/>
    </location>
</feature>
<feature type="region of interest" description="Disordered" evidence="1">
    <location>
        <begin position="1"/>
        <end position="24"/>
    </location>
</feature>
<accession>P14504</accession>
<proteinExistence type="predicted"/>
<reference key="1">
    <citation type="journal article" date="1985" name="Nucleic Acids Res.">
        <title>Comparison of the nucleotide sequences of the vegetative replication origins of broad host range IncP plasmids R751 and RK2 reveals conserved features of probable functional importance.</title>
        <authorList>
            <person name="Smith C.A."/>
            <person name="Thomas C.M."/>
        </authorList>
    </citation>
    <scope>NUCLEOTIDE SEQUENCE [GENOMIC DNA]</scope>
</reference>
<name>YP54_ECOLX</name>
<sequence length="51" mass="5472">MGGRFSGRVGIEKGGHPPSAADHSAGHLGPVCRFFRHPVITTRFNIKVMKG</sequence>
<keyword id="KW-0614">Plasmid</keyword>
<dbReference type="EMBL" id="X01751">
    <property type="protein sequence ID" value="CAA25887.1"/>
    <property type="molecule type" value="Genomic_DNA"/>
</dbReference>
<dbReference type="EMBL" id="U67194">
    <property type="protein sequence ID" value="AAC64432.1"/>
    <property type="molecule type" value="Genomic_DNA"/>
</dbReference>
<geneLocation type="plasmid">
    <name>IncP-beta R751</name>
</geneLocation>
<organism>
    <name type="scientific">Escherichia coli</name>
    <dbReference type="NCBI Taxonomy" id="562"/>
    <lineage>
        <taxon>Bacteria</taxon>
        <taxon>Pseudomonadati</taxon>
        <taxon>Pseudomonadota</taxon>
        <taxon>Gammaproteobacteria</taxon>
        <taxon>Enterobacterales</taxon>
        <taxon>Enterobacteriaceae</taxon>
        <taxon>Escherichia</taxon>
    </lineage>
</organism>
<evidence type="ECO:0000256" key="1">
    <source>
        <dbReference type="SAM" id="MobiDB-lite"/>
    </source>
</evidence>
<protein>
    <recommendedName>
        <fullName>Uncharacterized 5.4 kDa protein in replication origin region</fullName>
    </recommendedName>
    <alternativeName>
        <fullName>ORF2</fullName>
    </alternativeName>
</protein>